<evidence type="ECO:0000250" key="1"/>
<evidence type="ECO:0000250" key="2">
    <source>
        <dbReference type="UniProtKB" id="O43677"/>
    </source>
</evidence>
<evidence type="ECO:0000250" key="3">
    <source>
        <dbReference type="UniProtKB" id="Q02376"/>
    </source>
</evidence>
<evidence type="ECO:0000255" key="4"/>
<evidence type="ECO:0000305" key="5"/>
<name>NDUC1_PONPY</name>
<reference key="1">
    <citation type="journal article" date="2006" name="Gene">
        <title>Adaptive selection of mitochondrial complex I subunits during primate radiation.</title>
        <authorList>
            <person name="Mishmar D."/>
            <person name="Ruiz-Pesini E."/>
            <person name="Mondragon-Palomino M."/>
            <person name="Procaccio V."/>
            <person name="Gaut B."/>
            <person name="Wallace D.C."/>
        </authorList>
    </citation>
    <scope>NUCLEOTIDE SEQUENCE [MRNA]</scope>
</reference>
<keyword id="KW-0249">Electron transport</keyword>
<keyword id="KW-0472">Membrane</keyword>
<keyword id="KW-0496">Mitochondrion</keyword>
<keyword id="KW-0999">Mitochondrion inner membrane</keyword>
<keyword id="KW-0679">Respiratory chain</keyword>
<keyword id="KW-0809">Transit peptide</keyword>
<keyword id="KW-0812">Transmembrane</keyword>
<keyword id="KW-1133">Transmembrane helix</keyword>
<keyword id="KW-0813">Transport</keyword>
<accession>P0CB70</accession>
<accession>Q0MQF4</accession>
<accession>Q5R7L5</accession>
<accession>Q5R8I1</accession>
<comment type="function">
    <text evidence="2">Accessory subunit of the mitochondrial membrane respiratory chain NADH dehydrogenase (Complex I), that is believed not to be involved in catalysis. Complex I functions in the transfer of electrons from NADH to the respiratory chain. The immediate electron acceptor for the enzyme is believed to be ubiquinone.</text>
</comment>
<comment type="subunit">
    <text evidence="2">Complex I is composed of 45 different subunits.</text>
</comment>
<comment type="subcellular location">
    <subcellularLocation>
        <location evidence="3">Mitochondrion inner membrane</location>
        <topology evidence="3">Single-pass membrane protein</topology>
        <orientation evidence="3">Matrix side</orientation>
    </subcellularLocation>
</comment>
<comment type="similarity">
    <text evidence="5">Belongs to the complex I NDUFC1 subunit family.</text>
</comment>
<gene>
    <name type="primary">NDUFC1</name>
</gene>
<sequence>MAPSALLRPVSRLLAPARLPSGRASARSKFYVREPLNAKPDWLKVGFTLGTTVFLWVYLIKQHNEDILEYKRRNGLE</sequence>
<protein>
    <recommendedName>
        <fullName>NADH dehydrogenase [ubiquinone] 1 subunit C1, mitochondrial</fullName>
    </recommendedName>
    <alternativeName>
        <fullName>Complex I-KFYI</fullName>
        <shortName>CI-KFYI</shortName>
    </alternativeName>
    <alternativeName>
        <fullName>NADH-ubiquinone oxidoreductase KFYI subunit</fullName>
    </alternativeName>
</protein>
<feature type="transit peptide" description="Mitochondrion" evidence="1">
    <location>
        <begin position="1"/>
        <end position="28"/>
    </location>
</feature>
<feature type="chain" id="PRO_0000389102" description="NADH dehydrogenase [ubiquinone] 1 subunit C1, mitochondrial">
    <location>
        <begin position="29"/>
        <end position="77"/>
    </location>
</feature>
<feature type="transmembrane region" description="Helical" evidence="4">
    <location>
        <begin position="42"/>
        <end position="60"/>
    </location>
</feature>
<dbReference type="EMBL" id="DQ885680">
    <property type="protein sequence ID" value="ABH12189.1"/>
    <property type="molecule type" value="mRNA"/>
</dbReference>
<dbReference type="SMR" id="P0CB70"/>
<dbReference type="GO" id="GO:0005743">
    <property type="term" value="C:mitochondrial inner membrane"/>
    <property type="evidence" value="ECO:0007669"/>
    <property type="project" value="UniProtKB-SubCell"/>
</dbReference>
<dbReference type="GO" id="GO:0045271">
    <property type="term" value="C:respiratory chain complex I"/>
    <property type="evidence" value="ECO:0000250"/>
    <property type="project" value="UniProtKB"/>
</dbReference>
<dbReference type="InterPro" id="IPR026192">
    <property type="entry name" value="NDUFC1"/>
</dbReference>
<dbReference type="PANTHER" id="PTHR17097:SF0">
    <property type="entry name" value="NADH DEHYDROGENASE [UBIQUINONE] 1 SUBUNIT C1, MITOCHONDRIAL"/>
    <property type="match status" value="1"/>
</dbReference>
<dbReference type="PANTHER" id="PTHR17097">
    <property type="entry name" value="NADH-UBIQUINONE OXIDOREDUCTASE KFYI SUBUNIT"/>
    <property type="match status" value="1"/>
</dbReference>
<dbReference type="Pfam" id="PF15088">
    <property type="entry name" value="NADH_dh_m_C1"/>
    <property type="match status" value="1"/>
</dbReference>
<organism>
    <name type="scientific">Pongo pygmaeus</name>
    <name type="common">Bornean orangutan</name>
    <dbReference type="NCBI Taxonomy" id="9600"/>
    <lineage>
        <taxon>Eukaryota</taxon>
        <taxon>Metazoa</taxon>
        <taxon>Chordata</taxon>
        <taxon>Craniata</taxon>
        <taxon>Vertebrata</taxon>
        <taxon>Euteleostomi</taxon>
        <taxon>Mammalia</taxon>
        <taxon>Eutheria</taxon>
        <taxon>Euarchontoglires</taxon>
        <taxon>Primates</taxon>
        <taxon>Haplorrhini</taxon>
        <taxon>Catarrhini</taxon>
        <taxon>Hominidae</taxon>
        <taxon>Pongo</taxon>
    </lineage>
</organism>
<proteinExistence type="inferred from homology"/>